<feature type="chain" id="PRO_0000196345" description="Nodulation protein A">
    <location>
        <begin position="1"/>
        <end position="196"/>
    </location>
</feature>
<name>NODA_RHITR</name>
<organism>
    <name type="scientific">Rhizobium tropici</name>
    <dbReference type="NCBI Taxonomy" id="398"/>
    <lineage>
        <taxon>Bacteria</taxon>
        <taxon>Pseudomonadati</taxon>
        <taxon>Pseudomonadota</taxon>
        <taxon>Alphaproteobacteria</taxon>
        <taxon>Hyphomicrobiales</taxon>
        <taxon>Rhizobiaceae</taxon>
        <taxon>Rhizobium/Agrobacterium group</taxon>
        <taxon>Rhizobium</taxon>
    </lineage>
</organism>
<keyword id="KW-0012">Acyltransferase</keyword>
<keyword id="KW-0963">Cytoplasm</keyword>
<keyword id="KW-0536">Nodulation</keyword>
<keyword id="KW-0614">Plasmid</keyword>
<keyword id="KW-0808">Transferase</keyword>
<comment type="function">
    <text>N-acyltransferase required for nodulation. Acts in the production of a small, heat-stable compound (Nod) that stimulates mitosis in various plant protoplasts.</text>
</comment>
<comment type="subcellular location">
    <subcellularLocation>
        <location>Cytoplasm</location>
    </subcellularLocation>
</comment>
<comment type="similarity">
    <text evidence="1">Belongs to the NodA family.</text>
</comment>
<evidence type="ECO:0000305" key="1"/>
<protein>
    <recommendedName>
        <fullName>Nodulation protein A</fullName>
        <ecNumber>2.3.1.-</ecNumber>
    </recommendedName>
</protein>
<reference key="1">
    <citation type="journal article" date="1996" name="Mol. Microbiol.">
        <title>The NodA proteins of Rhizobium meliloti and Rhizobium tropici specify the N-acylation of Nod factors by different fatty acids.</title>
        <authorList>
            <person name="Debelle F."/>
            <person name="Plazanet C."/>
            <person name="Roche P."/>
            <person name="Pujol C."/>
            <person name="Savagnac A."/>
            <person name="Rosenberg C."/>
            <person name="Prome J.-C."/>
            <person name="Denarie J."/>
        </authorList>
    </citation>
    <scope>NUCLEOTIDE SEQUENCE [GENOMIC DNA]</scope>
    <source>
        <strain>CFN 299</strain>
    </source>
</reference>
<gene>
    <name type="primary">nodA</name>
</gene>
<dbReference type="EC" id="2.3.1.-"/>
<dbReference type="EMBL" id="X98514">
    <property type="protein sequence ID" value="CAA67137.1"/>
    <property type="molecule type" value="Genomic_DNA"/>
</dbReference>
<dbReference type="SMR" id="Q53252"/>
<dbReference type="GO" id="GO:0005829">
    <property type="term" value="C:cytosol"/>
    <property type="evidence" value="ECO:0007669"/>
    <property type="project" value="InterPro"/>
</dbReference>
<dbReference type="GO" id="GO:0016746">
    <property type="term" value="F:acyltransferase activity"/>
    <property type="evidence" value="ECO:0007669"/>
    <property type="project" value="UniProtKB-UniRule"/>
</dbReference>
<dbReference type="Gene3D" id="3.40.630.30">
    <property type="match status" value="1"/>
</dbReference>
<dbReference type="HAMAP" id="MF_00084">
    <property type="entry name" value="NodA"/>
    <property type="match status" value="1"/>
</dbReference>
<dbReference type="InterPro" id="IPR016181">
    <property type="entry name" value="Acyl_CoA_acyltransferase"/>
</dbReference>
<dbReference type="InterPro" id="IPR003484">
    <property type="entry name" value="NodA"/>
</dbReference>
<dbReference type="InterPro" id="IPR020567">
    <property type="entry name" value="Nodulation_prot_NodA_CS"/>
</dbReference>
<dbReference type="NCBIfam" id="TIGR04245">
    <property type="entry name" value="nodulat_NodA"/>
    <property type="match status" value="1"/>
</dbReference>
<dbReference type="NCBIfam" id="NF001974">
    <property type="entry name" value="PRK00756.1"/>
    <property type="match status" value="1"/>
</dbReference>
<dbReference type="Pfam" id="PF02474">
    <property type="entry name" value="NodA"/>
    <property type="match status" value="1"/>
</dbReference>
<dbReference type="SUPFAM" id="SSF55729">
    <property type="entry name" value="Acyl-CoA N-acyltransferases (Nat)"/>
    <property type="match status" value="1"/>
</dbReference>
<dbReference type="PROSITE" id="PS01349">
    <property type="entry name" value="NODA"/>
    <property type="match status" value="1"/>
</dbReference>
<proteinExistence type="inferred from homology"/>
<accession>Q53252</accession>
<sequence length="196" mass="21632">MRSKVRWRLCWENELELAEHIELADFFRMTYGPTGPFNAKPFEGSRSWAGARPELRLIAYDANGVAAHLGLLRRFIKIGAIDQLVGELGLYGVRPDLEGLGIGHSVHAMLPVFGELAVPFAFGTVRPALQKHIERFGRYGPVTILSGIRVSSTLPEARLDKPPTRIDDALVIVLPIGRSISDWPAGTVIDRNGPEL</sequence>